<gene>
    <name type="primary">MEL</name>
</gene>
<reference key="1">
    <citation type="journal article" date="1999" name="Yeast">
        <title>Isolation and characterization of MELt gene from Torulaspora delbrueckii IFO 1255.</title>
        <authorList>
            <person name="Oda Y."/>
            <person name="Fukunaga M."/>
        </authorList>
    </citation>
    <scope>NUCLEOTIDE SEQUENCE [GENOMIC DNA]</scope>
    <source>
        <strain>NBRC 1255 / IAM 4952</strain>
    </source>
</reference>
<name>MEL_TORDE</name>
<proteinExistence type="inferred from homology"/>
<accession>Q9UVD6</accession>
<organism>
    <name type="scientific">Torulaspora delbrueckii</name>
    <name type="common">Yeast</name>
    <name type="synonym">Candida colliculosa</name>
    <dbReference type="NCBI Taxonomy" id="4950"/>
    <lineage>
        <taxon>Eukaryota</taxon>
        <taxon>Fungi</taxon>
        <taxon>Dikarya</taxon>
        <taxon>Ascomycota</taxon>
        <taxon>Saccharomycotina</taxon>
        <taxon>Saccharomycetes</taxon>
        <taxon>Saccharomycetales</taxon>
        <taxon>Saccharomycetaceae</taxon>
        <taxon>Torulaspora</taxon>
    </lineage>
</organism>
<keyword id="KW-1015">Disulfide bond</keyword>
<keyword id="KW-0325">Glycoprotein</keyword>
<keyword id="KW-0326">Glycosidase</keyword>
<keyword id="KW-0378">Hydrolase</keyword>
<keyword id="KW-0964">Secreted</keyword>
<keyword id="KW-0732">Signal</keyword>
<dbReference type="EC" id="3.2.1.22"/>
<dbReference type="EMBL" id="AB027130">
    <property type="protein sequence ID" value="BAA86883.1"/>
    <property type="molecule type" value="Genomic_DNA"/>
</dbReference>
<dbReference type="SMR" id="Q9UVD6"/>
<dbReference type="CAZy" id="GH27">
    <property type="family name" value="Glycoside Hydrolase Family 27"/>
</dbReference>
<dbReference type="GlyCosmos" id="Q9UVD6">
    <property type="glycosylation" value="7 sites, No reported glycans"/>
</dbReference>
<dbReference type="GO" id="GO:0005576">
    <property type="term" value="C:extracellular region"/>
    <property type="evidence" value="ECO:0007669"/>
    <property type="project" value="UniProtKB-SubCell"/>
</dbReference>
<dbReference type="GO" id="GO:0004557">
    <property type="term" value="F:alpha-galactosidase activity"/>
    <property type="evidence" value="ECO:0007669"/>
    <property type="project" value="UniProtKB-EC"/>
</dbReference>
<dbReference type="GO" id="GO:0005995">
    <property type="term" value="P:melibiose catabolic process"/>
    <property type="evidence" value="ECO:0007669"/>
    <property type="project" value="UniProtKB-ARBA"/>
</dbReference>
<dbReference type="CDD" id="cd14792">
    <property type="entry name" value="GH27"/>
    <property type="match status" value="1"/>
</dbReference>
<dbReference type="FunFam" id="3.20.20.70:FF:000202">
    <property type="entry name" value="Alpha-galactosidase"/>
    <property type="match status" value="1"/>
</dbReference>
<dbReference type="Gene3D" id="3.20.20.70">
    <property type="entry name" value="Aldolase class I"/>
    <property type="match status" value="1"/>
</dbReference>
<dbReference type="Gene3D" id="2.60.40.1180">
    <property type="entry name" value="Golgi alpha-mannosidase II"/>
    <property type="match status" value="1"/>
</dbReference>
<dbReference type="InterPro" id="IPR013785">
    <property type="entry name" value="Aldolase_TIM"/>
</dbReference>
<dbReference type="InterPro" id="IPR002241">
    <property type="entry name" value="Glyco_hydro_27"/>
</dbReference>
<dbReference type="InterPro" id="IPR000111">
    <property type="entry name" value="Glyco_hydro_27/36_CS"/>
</dbReference>
<dbReference type="InterPro" id="IPR013780">
    <property type="entry name" value="Glyco_hydro_b"/>
</dbReference>
<dbReference type="InterPro" id="IPR006215">
    <property type="entry name" value="Glyco_hydro_melibiase"/>
</dbReference>
<dbReference type="InterPro" id="IPR017853">
    <property type="entry name" value="Glycoside_hydrolase_SF"/>
</dbReference>
<dbReference type="InterPro" id="IPR041233">
    <property type="entry name" value="Melibiase_C"/>
</dbReference>
<dbReference type="PANTHER" id="PTHR11452:SF75">
    <property type="entry name" value="ALPHA-GALACTOSIDASE MEL1"/>
    <property type="match status" value="1"/>
</dbReference>
<dbReference type="PANTHER" id="PTHR11452">
    <property type="entry name" value="ALPHA-GALACTOSIDASE/ALPHA-N-ACETYLGALACTOSAMINIDASE"/>
    <property type="match status" value="1"/>
</dbReference>
<dbReference type="Pfam" id="PF16499">
    <property type="entry name" value="Melibiase_2"/>
    <property type="match status" value="1"/>
</dbReference>
<dbReference type="Pfam" id="PF17801">
    <property type="entry name" value="Melibiase_C"/>
    <property type="match status" value="1"/>
</dbReference>
<dbReference type="PRINTS" id="PR00740">
    <property type="entry name" value="GLHYDRLASE27"/>
</dbReference>
<dbReference type="PRINTS" id="PR00748">
    <property type="entry name" value="MELIBIASE"/>
</dbReference>
<dbReference type="SUPFAM" id="SSF51445">
    <property type="entry name" value="(Trans)glycosidases"/>
    <property type="match status" value="1"/>
</dbReference>
<dbReference type="SUPFAM" id="SSF51011">
    <property type="entry name" value="Glycosyl hydrolase domain"/>
    <property type="match status" value="1"/>
</dbReference>
<dbReference type="PROSITE" id="PS00512">
    <property type="entry name" value="ALPHA_GALACTOSIDASE"/>
    <property type="match status" value="1"/>
</dbReference>
<evidence type="ECO:0000250" key="1"/>
<evidence type="ECO:0000255" key="2"/>
<evidence type="ECO:0000305" key="3"/>
<comment type="catalytic activity">
    <reaction>
        <text>Hydrolysis of terminal, non-reducing alpha-D-galactose residues in alpha-D-galactosides, including galactose oligosaccharides, galactomannans and galactolipids.</text>
        <dbReference type="EC" id="3.2.1.22"/>
    </reaction>
</comment>
<comment type="subunit">
    <text evidence="1">Homotetramer.</text>
</comment>
<comment type="subcellular location">
    <subcellularLocation>
        <location evidence="1">Secreted</location>
    </subcellularLocation>
</comment>
<comment type="similarity">
    <text evidence="3">Belongs to the glycosyl hydrolase 27 family.</text>
</comment>
<sequence>MINFSLLTSIVLLASKVVGVSPSYNGLGLTPQMGWNNWNTFACNVSEDLLLSTVDRIAALGLRDIGYHYVILDDCWSDGRDSDGMLVPDSTKFPNGMKHVADYLHGKDFLFGMYSSAGEYTCAGYAGSLDHEEDDAAFFAKNEVDYLKYDNCYNRGQFGTPETSFNRYRAMSEALNKTERPIFYSLCNWGQDLTFYWGSGIANSWRISGDITAEFDRPDSRCPCDGDEYDCPYAGFHCSIMNILNKAAPMGQNAGVGGWNDLDCLEVGVGNLTDDEEKAHFSMWAIVKSAMVIGADVRNLKPSSFSIYSQASVLAINQDPAGAPAIRVWRRYVPETDQHGQGEVQLWSGPLDNGDRVVALLNGGAKERPMVAYLEDIFIDSFVGSEELSSTWNVYDLWANRIDDSTASQILVGNRTANGLLYNATQLSYADGLKANDTRLFGEKVGTIEPYGLLNVTVPAHGVGLFRLRRESRK</sequence>
<feature type="signal peptide" evidence="2">
    <location>
        <begin position="1"/>
        <end position="22"/>
    </location>
</feature>
<feature type="chain" id="PRO_0000001010" description="Alpha-galactosidase">
    <location>
        <begin position="23"/>
        <end position="474"/>
    </location>
</feature>
<feature type="active site" description="Nucleophile" evidence="1">
    <location>
        <position position="150"/>
    </location>
</feature>
<feature type="active site" description="Proton donor" evidence="1">
    <location>
        <position position="210"/>
    </location>
</feature>
<feature type="binding site" evidence="1">
    <location>
        <position position="73"/>
    </location>
    <ligand>
        <name>substrate</name>
    </ligand>
</feature>
<feature type="binding site" evidence="1">
    <location>
        <position position="74"/>
    </location>
    <ligand>
        <name>substrate</name>
    </ligand>
</feature>
<feature type="binding site" evidence="1">
    <location>
        <position position="148"/>
    </location>
    <ligand>
        <name>substrate</name>
    </ligand>
</feature>
<feature type="binding site" evidence="1">
    <location>
        <position position="206"/>
    </location>
    <ligand>
        <name>substrate</name>
    </ligand>
</feature>
<feature type="binding site" evidence="1">
    <location>
        <position position="252"/>
    </location>
    <ligand>
        <name>substrate</name>
    </ligand>
</feature>
<feature type="glycosylation site" description="N-linked (GlcNAc...) asparagine" evidence="2">
    <location>
        <position position="44"/>
    </location>
</feature>
<feature type="glycosylation site" description="N-linked (GlcNAc...) asparagine" evidence="2">
    <location>
        <position position="176"/>
    </location>
</feature>
<feature type="glycosylation site" description="N-linked (GlcNAc...) asparagine" evidence="2">
    <location>
        <position position="271"/>
    </location>
</feature>
<feature type="glycosylation site" description="N-linked (GlcNAc...) asparagine" evidence="2">
    <location>
        <position position="414"/>
    </location>
</feature>
<feature type="glycosylation site" description="N-linked (GlcNAc...) asparagine" evidence="2">
    <location>
        <position position="423"/>
    </location>
</feature>
<feature type="glycosylation site" description="N-linked (GlcNAc...) asparagine" evidence="2">
    <location>
        <position position="436"/>
    </location>
</feature>
<feature type="glycosylation site" description="N-linked (GlcNAc...) asparagine" evidence="2">
    <location>
        <position position="455"/>
    </location>
</feature>
<feature type="disulfide bond" evidence="1">
    <location>
        <begin position="43"/>
        <end position="75"/>
    </location>
</feature>
<feature type="disulfide bond" evidence="1">
    <location>
        <begin position="122"/>
        <end position="152"/>
    </location>
</feature>
<feature type="disulfide bond" evidence="1">
    <location>
        <begin position="222"/>
        <end position="238"/>
    </location>
</feature>
<feature type="disulfide bond" evidence="1">
    <location>
        <begin position="224"/>
        <end position="231"/>
    </location>
</feature>
<protein>
    <recommendedName>
        <fullName>Alpha-galactosidase</fullName>
        <ecNumber>3.2.1.22</ecNumber>
    </recommendedName>
    <alternativeName>
        <fullName>Alpha-D-galactoside galactohydrolase</fullName>
    </alternativeName>
    <alternativeName>
        <fullName>MELt</fullName>
    </alternativeName>
    <alternativeName>
        <fullName>Melibiase</fullName>
    </alternativeName>
</protein>